<gene>
    <name evidence="1" type="primary">bioB</name>
    <name type="ordered locus">VIBHAR_01807</name>
</gene>
<feature type="chain" id="PRO_0000381699" description="Biotin synthase">
    <location>
        <begin position="1"/>
        <end position="350"/>
    </location>
</feature>
<feature type="domain" description="Radical SAM core" evidence="2">
    <location>
        <begin position="38"/>
        <end position="256"/>
    </location>
</feature>
<feature type="binding site" evidence="1">
    <location>
        <position position="53"/>
    </location>
    <ligand>
        <name>[4Fe-4S] cluster</name>
        <dbReference type="ChEBI" id="CHEBI:49883"/>
        <note>4Fe-4S-S-AdoMet</note>
    </ligand>
</feature>
<feature type="binding site" evidence="1">
    <location>
        <position position="57"/>
    </location>
    <ligand>
        <name>[4Fe-4S] cluster</name>
        <dbReference type="ChEBI" id="CHEBI:49883"/>
        <note>4Fe-4S-S-AdoMet</note>
    </ligand>
</feature>
<feature type="binding site" evidence="1">
    <location>
        <position position="60"/>
    </location>
    <ligand>
        <name>[4Fe-4S] cluster</name>
        <dbReference type="ChEBI" id="CHEBI:49883"/>
        <note>4Fe-4S-S-AdoMet</note>
    </ligand>
</feature>
<feature type="binding site" evidence="1">
    <location>
        <position position="97"/>
    </location>
    <ligand>
        <name>[2Fe-2S] cluster</name>
        <dbReference type="ChEBI" id="CHEBI:190135"/>
    </ligand>
</feature>
<feature type="binding site" evidence="1">
    <location>
        <position position="128"/>
    </location>
    <ligand>
        <name>[2Fe-2S] cluster</name>
        <dbReference type="ChEBI" id="CHEBI:190135"/>
    </ligand>
</feature>
<feature type="binding site" evidence="1">
    <location>
        <position position="188"/>
    </location>
    <ligand>
        <name>[2Fe-2S] cluster</name>
        <dbReference type="ChEBI" id="CHEBI:190135"/>
    </ligand>
</feature>
<feature type="binding site" evidence="1">
    <location>
        <position position="260"/>
    </location>
    <ligand>
        <name>[2Fe-2S] cluster</name>
        <dbReference type="ChEBI" id="CHEBI:190135"/>
    </ligand>
</feature>
<protein>
    <recommendedName>
        <fullName evidence="1">Biotin synthase</fullName>
        <ecNumber evidence="1">2.8.1.6</ecNumber>
    </recommendedName>
</protein>
<comment type="function">
    <text evidence="1">Catalyzes the conversion of dethiobiotin (DTB) to biotin by the insertion of a sulfur atom into dethiobiotin via a radical-based mechanism.</text>
</comment>
<comment type="catalytic activity">
    <reaction evidence="1">
        <text>(4R,5S)-dethiobiotin + (sulfur carrier)-SH + 2 reduced [2Fe-2S]-[ferredoxin] + 2 S-adenosyl-L-methionine = (sulfur carrier)-H + biotin + 2 5'-deoxyadenosine + 2 L-methionine + 2 oxidized [2Fe-2S]-[ferredoxin]</text>
        <dbReference type="Rhea" id="RHEA:22060"/>
        <dbReference type="Rhea" id="RHEA-COMP:10000"/>
        <dbReference type="Rhea" id="RHEA-COMP:10001"/>
        <dbReference type="Rhea" id="RHEA-COMP:14737"/>
        <dbReference type="Rhea" id="RHEA-COMP:14739"/>
        <dbReference type="ChEBI" id="CHEBI:17319"/>
        <dbReference type="ChEBI" id="CHEBI:29917"/>
        <dbReference type="ChEBI" id="CHEBI:33737"/>
        <dbReference type="ChEBI" id="CHEBI:33738"/>
        <dbReference type="ChEBI" id="CHEBI:57586"/>
        <dbReference type="ChEBI" id="CHEBI:57844"/>
        <dbReference type="ChEBI" id="CHEBI:59789"/>
        <dbReference type="ChEBI" id="CHEBI:64428"/>
        <dbReference type="ChEBI" id="CHEBI:149473"/>
        <dbReference type="EC" id="2.8.1.6"/>
    </reaction>
</comment>
<comment type="cofactor">
    <cofactor evidence="1">
        <name>[4Fe-4S] cluster</name>
        <dbReference type="ChEBI" id="CHEBI:49883"/>
    </cofactor>
    <text evidence="1">Binds 1 [4Fe-4S] cluster. The cluster is coordinated with 3 cysteines and an exchangeable S-adenosyl-L-methionine.</text>
</comment>
<comment type="cofactor">
    <cofactor evidence="1">
        <name>[2Fe-2S] cluster</name>
        <dbReference type="ChEBI" id="CHEBI:190135"/>
    </cofactor>
    <text evidence="1">Binds 1 [2Fe-2S] cluster. The cluster is coordinated with 3 cysteines and 1 arginine.</text>
</comment>
<comment type="pathway">
    <text evidence="1">Cofactor biosynthesis; biotin biosynthesis; biotin from 7,8-diaminononanoate: step 2/2.</text>
</comment>
<comment type="subunit">
    <text evidence="1">Homodimer.</text>
</comment>
<comment type="similarity">
    <text evidence="1">Belongs to the radical SAM superfamily. Biotin synthase family.</text>
</comment>
<comment type="sequence caution" evidence="3">
    <conflict type="erroneous initiation">
        <sequence resource="EMBL-CDS" id="ABU70776"/>
    </conflict>
</comment>
<sequence>MEVRHNWTHAEVRDLMEKPFMDLLFEAQLVHRQYQQTNYVQVSTLLSIKTGACPEDCKYCPQSARYTTDIEKERLMEVERVLDAAQKAKNAGSTRFCMGAAWKNPKERDMPHLTDMIKGVKGMGLETCMTLGMLTPDQAKQLATAGLDYYNHNLDTSPEFYGNIITTRTYQDRLDTLSHVRDAGMKICSGGIIGMGESANDRAGLLVELANLPVHPESVPINMLVKVKGTPLEEVDDVEPFDFIRLIAIARIMMPQSAVRLSAGRENMNEQMQALCFMAGANSVFYGCKLLTTPNPSEDKDMMLFNKLGINSQEVSQKPDEIEENELLDRVVERVTARPTKDDLFYDASV</sequence>
<proteinExistence type="inferred from homology"/>
<reference key="1">
    <citation type="submission" date="2007-08" db="EMBL/GenBank/DDBJ databases">
        <authorList>
            <consortium name="The Vibrio harveyi Genome Sequencing Project"/>
            <person name="Bassler B."/>
            <person name="Clifton S.W."/>
            <person name="Fulton L."/>
            <person name="Delehaunty K."/>
            <person name="Fronick C."/>
            <person name="Harrison M."/>
            <person name="Markivic C."/>
            <person name="Fulton R."/>
            <person name="Tin-Wollam A.-M."/>
            <person name="Shah N."/>
            <person name="Pepin K."/>
            <person name="Nash W."/>
            <person name="Thiruvilangam P."/>
            <person name="Bhonagiri V."/>
            <person name="Waters C."/>
            <person name="Tu K.C."/>
            <person name="Irgon J."/>
            <person name="Wilson R.K."/>
        </authorList>
    </citation>
    <scope>NUCLEOTIDE SEQUENCE [LARGE SCALE GENOMIC DNA]</scope>
    <source>
        <strain>ATCC BAA-1116 / BB120</strain>
    </source>
</reference>
<keyword id="KW-0001">2Fe-2S</keyword>
<keyword id="KW-0004">4Fe-4S</keyword>
<keyword id="KW-0093">Biotin biosynthesis</keyword>
<keyword id="KW-0408">Iron</keyword>
<keyword id="KW-0411">Iron-sulfur</keyword>
<keyword id="KW-0479">Metal-binding</keyword>
<keyword id="KW-0949">S-adenosyl-L-methionine</keyword>
<keyword id="KW-0808">Transferase</keyword>
<evidence type="ECO:0000255" key="1">
    <source>
        <dbReference type="HAMAP-Rule" id="MF_01694"/>
    </source>
</evidence>
<evidence type="ECO:0000255" key="2">
    <source>
        <dbReference type="PROSITE-ProRule" id="PRU01266"/>
    </source>
</evidence>
<evidence type="ECO:0000305" key="3"/>
<name>BIOB_VIBC1</name>
<organism>
    <name type="scientific">Vibrio campbellii (strain ATCC BAA-1116)</name>
    <dbReference type="NCBI Taxonomy" id="2902295"/>
    <lineage>
        <taxon>Bacteria</taxon>
        <taxon>Pseudomonadati</taxon>
        <taxon>Pseudomonadota</taxon>
        <taxon>Gammaproteobacteria</taxon>
        <taxon>Vibrionales</taxon>
        <taxon>Vibrionaceae</taxon>
        <taxon>Vibrio</taxon>
    </lineage>
</organism>
<dbReference type="EC" id="2.8.1.6" evidence="1"/>
<dbReference type="EMBL" id="CP000789">
    <property type="protein sequence ID" value="ABU70776.1"/>
    <property type="status" value="ALT_INIT"/>
    <property type="molecule type" value="Genomic_DNA"/>
</dbReference>
<dbReference type="RefSeq" id="WP_021017808.1">
    <property type="nucleotide sequence ID" value="NC_009783.1"/>
</dbReference>
<dbReference type="SMR" id="A7MX36"/>
<dbReference type="KEGG" id="vha:VIBHAR_01807"/>
<dbReference type="PATRIC" id="fig|338187.25.peg.868"/>
<dbReference type="UniPathway" id="UPA00078">
    <property type="reaction ID" value="UER00162"/>
</dbReference>
<dbReference type="Proteomes" id="UP000008152">
    <property type="component" value="Chromosome I"/>
</dbReference>
<dbReference type="GO" id="GO:0051537">
    <property type="term" value="F:2 iron, 2 sulfur cluster binding"/>
    <property type="evidence" value="ECO:0007669"/>
    <property type="project" value="UniProtKB-KW"/>
</dbReference>
<dbReference type="GO" id="GO:0051539">
    <property type="term" value="F:4 iron, 4 sulfur cluster binding"/>
    <property type="evidence" value="ECO:0007669"/>
    <property type="project" value="UniProtKB-KW"/>
</dbReference>
<dbReference type="GO" id="GO:0004076">
    <property type="term" value="F:biotin synthase activity"/>
    <property type="evidence" value="ECO:0007669"/>
    <property type="project" value="UniProtKB-UniRule"/>
</dbReference>
<dbReference type="GO" id="GO:0005506">
    <property type="term" value="F:iron ion binding"/>
    <property type="evidence" value="ECO:0007669"/>
    <property type="project" value="UniProtKB-UniRule"/>
</dbReference>
<dbReference type="GO" id="GO:0009102">
    <property type="term" value="P:biotin biosynthetic process"/>
    <property type="evidence" value="ECO:0007669"/>
    <property type="project" value="UniProtKB-UniRule"/>
</dbReference>
<dbReference type="CDD" id="cd01335">
    <property type="entry name" value="Radical_SAM"/>
    <property type="match status" value="1"/>
</dbReference>
<dbReference type="FunFam" id="3.20.20.70:FF:000011">
    <property type="entry name" value="Biotin synthase"/>
    <property type="match status" value="1"/>
</dbReference>
<dbReference type="Gene3D" id="3.20.20.70">
    <property type="entry name" value="Aldolase class I"/>
    <property type="match status" value="1"/>
</dbReference>
<dbReference type="HAMAP" id="MF_01694">
    <property type="entry name" value="BioB"/>
    <property type="match status" value="1"/>
</dbReference>
<dbReference type="InterPro" id="IPR013785">
    <property type="entry name" value="Aldolase_TIM"/>
</dbReference>
<dbReference type="InterPro" id="IPR010722">
    <property type="entry name" value="BATS_dom"/>
</dbReference>
<dbReference type="InterPro" id="IPR002684">
    <property type="entry name" value="Biotin_synth/BioAB"/>
</dbReference>
<dbReference type="InterPro" id="IPR024177">
    <property type="entry name" value="Biotin_synthase"/>
</dbReference>
<dbReference type="InterPro" id="IPR006638">
    <property type="entry name" value="Elp3/MiaA/NifB-like_rSAM"/>
</dbReference>
<dbReference type="InterPro" id="IPR007197">
    <property type="entry name" value="rSAM"/>
</dbReference>
<dbReference type="NCBIfam" id="TIGR00433">
    <property type="entry name" value="bioB"/>
    <property type="match status" value="1"/>
</dbReference>
<dbReference type="PANTHER" id="PTHR22976">
    <property type="entry name" value="BIOTIN SYNTHASE"/>
    <property type="match status" value="1"/>
</dbReference>
<dbReference type="PANTHER" id="PTHR22976:SF2">
    <property type="entry name" value="BIOTIN SYNTHASE, MITOCHONDRIAL"/>
    <property type="match status" value="1"/>
</dbReference>
<dbReference type="Pfam" id="PF06968">
    <property type="entry name" value="BATS"/>
    <property type="match status" value="1"/>
</dbReference>
<dbReference type="Pfam" id="PF04055">
    <property type="entry name" value="Radical_SAM"/>
    <property type="match status" value="1"/>
</dbReference>
<dbReference type="PIRSF" id="PIRSF001619">
    <property type="entry name" value="Biotin_synth"/>
    <property type="match status" value="1"/>
</dbReference>
<dbReference type="SFLD" id="SFLDF00272">
    <property type="entry name" value="biotin_synthase"/>
    <property type="match status" value="1"/>
</dbReference>
<dbReference type="SFLD" id="SFLDG01278">
    <property type="entry name" value="biotin_synthase_like"/>
    <property type="match status" value="1"/>
</dbReference>
<dbReference type="SMART" id="SM00876">
    <property type="entry name" value="BATS"/>
    <property type="match status" value="1"/>
</dbReference>
<dbReference type="SMART" id="SM00729">
    <property type="entry name" value="Elp3"/>
    <property type="match status" value="1"/>
</dbReference>
<dbReference type="SUPFAM" id="SSF102114">
    <property type="entry name" value="Radical SAM enzymes"/>
    <property type="match status" value="1"/>
</dbReference>
<dbReference type="PROSITE" id="PS51918">
    <property type="entry name" value="RADICAL_SAM"/>
    <property type="match status" value="1"/>
</dbReference>
<accession>A7MX36</accession>